<gene>
    <name evidence="1" type="primary">secA</name>
    <name type="ordered locus">LCABL_10420</name>
</gene>
<organism>
    <name type="scientific">Lacticaseibacillus casei (strain BL23)</name>
    <name type="common">Lactobacillus casei</name>
    <dbReference type="NCBI Taxonomy" id="543734"/>
    <lineage>
        <taxon>Bacteria</taxon>
        <taxon>Bacillati</taxon>
        <taxon>Bacillota</taxon>
        <taxon>Bacilli</taxon>
        <taxon>Lactobacillales</taxon>
        <taxon>Lactobacillaceae</taxon>
        <taxon>Lacticaseibacillus</taxon>
    </lineage>
</organism>
<dbReference type="EC" id="7.4.2.8" evidence="1"/>
<dbReference type="EMBL" id="FM177140">
    <property type="protein sequence ID" value="CAQ66128.1"/>
    <property type="molecule type" value="Genomic_DNA"/>
</dbReference>
<dbReference type="SMR" id="B3WCM7"/>
<dbReference type="KEGG" id="lcb:LCABL_10420"/>
<dbReference type="HOGENOM" id="CLU_005314_3_0_9"/>
<dbReference type="GO" id="GO:0031522">
    <property type="term" value="C:cell envelope Sec protein transport complex"/>
    <property type="evidence" value="ECO:0007669"/>
    <property type="project" value="TreeGrafter"/>
</dbReference>
<dbReference type="GO" id="GO:0005829">
    <property type="term" value="C:cytosol"/>
    <property type="evidence" value="ECO:0007669"/>
    <property type="project" value="TreeGrafter"/>
</dbReference>
<dbReference type="GO" id="GO:0005886">
    <property type="term" value="C:plasma membrane"/>
    <property type="evidence" value="ECO:0007669"/>
    <property type="project" value="UniProtKB-SubCell"/>
</dbReference>
<dbReference type="GO" id="GO:0005524">
    <property type="term" value="F:ATP binding"/>
    <property type="evidence" value="ECO:0007669"/>
    <property type="project" value="UniProtKB-UniRule"/>
</dbReference>
<dbReference type="GO" id="GO:0008564">
    <property type="term" value="F:protein-exporting ATPase activity"/>
    <property type="evidence" value="ECO:0007669"/>
    <property type="project" value="UniProtKB-EC"/>
</dbReference>
<dbReference type="GO" id="GO:0065002">
    <property type="term" value="P:intracellular protein transmembrane transport"/>
    <property type="evidence" value="ECO:0007669"/>
    <property type="project" value="UniProtKB-UniRule"/>
</dbReference>
<dbReference type="GO" id="GO:0017038">
    <property type="term" value="P:protein import"/>
    <property type="evidence" value="ECO:0007669"/>
    <property type="project" value="InterPro"/>
</dbReference>
<dbReference type="GO" id="GO:0006605">
    <property type="term" value="P:protein targeting"/>
    <property type="evidence" value="ECO:0007669"/>
    <property type="project" value="UniProtKB-UniRule"/>
</dbReference>
<dbReference type="GO" id="GO:0043952">
    <property type="term" value="P:protein transport by the Sec complex"/>
    <property type="evidence" value="ECO:0007669"/>
    <property type="project" value="TreeGrafter"/>
</dbReference>
<dbReference type="CDD" id="cd17928">
    <property type="entry name" value="DEXDc_SecA"/>
    <property type="match status" value="1"/>
</dbReference>
<dbReference type="CDD" id="cd18803">
    <property type="entry name" value="SF2_C_secA"/>
    <property type="match status" value="1"/>
</dbReference>
<dbReference type="FunFam" id="1.10.3060.10:FF:000002">
    <property type="entry name" value="Preprotein translocase subunit SecA"/>
    <property type="match status" value="1"/>
</dbReference>
<dbReference type="FunFam" id="3.40.50.300:FF:000429">
    <property type="entry name" value="Preprotein translocase subunit SecA"/>
    <property type="match status" value="1"/>
</dbReference>
<dbReference type="FunFam" id="3.90.1440.10:FF:000001">
    <property type="entry name" value="Preprotein translocase subunit SecA"/>
    <property type="match status" value="1"/>
</dbReference>
<dbReference type="Gene3D" id="1.10.3060.10">
    <property type="entry name" value="Helical scaffold and wing domains of SecA"/>
    <property type="match status" value="1"/>
</dbReference>
<dbReference type="Gene3D" id="3.40.50.300">
    <property type="entry name" value="P-loop containing nucleotide triphosphate hydrolases"/>
    <property type="match status" value="2"/>
</dbReference>
<dbReference type="Gene3D" id="3.90.1440.10">
    <property type="entry name" value="SecA, preprotein cross-linking domain"/>
    <property type="match status" value="1"/>
</dbReference>
<dbReference type="HAMAP" id="MF_01382">
    <property type="entry name" value="SecA"/>
    <property type="match status" value="1"/>
</dbReference>
<dbReference type="InterPro" id="IPR014001">
    <property type="entry name" value="Helicase_ATP-bd"/>
</dbReference>
<dbReference type="InterPro" id="IPR001650">
    <property type="entry name" value="Helicase_C-like"/>
</dbReference>
<dbReference type="InterPro" id="IPR027417">
    <property type="entry name" value="P-loop_NTPase"/>
</dbReference>
<dbReference type="InterPro" id="IPR000185">
    <property type="entry name" value="SecA"/>
</dbReference>
<dbReference type="InterPro" id="IPR020937">
    <property type="entry name" value="SecA_CS"/>
</dbReference>
<dbReference type="InterPro" id="IPR011115">
    <property type="entry name" value="SecA_DEAD"/>
</dbReference>
<dbReference type="InterPro" id="IPR014018">
    <property type="entry name" value="SecA_motor_DEAD"/>
</dbReference>
<dbReference type="InterPro" id="IPR011130">
    <property type="entry name" value="SecA_preprotein_X-link_dom"/>
</dbReference>
<dbReference type="InterPro" id="IPR044722">
    <property type="entry name" value="SecA_SF2_C"/>
</dbReference>
<dbReference type="InterPro" id="IPR011116">
    <property type="entry name" value="SecA_Wing/Scaffold"/>
</dbReference>
<dbReference type="InterPro" id="IPR036266">
    <property type="entry name" value="SecA_Wing/Scaffold_sf"/>
</dbReference>
<dbReference type="InterPro" id="IPR036670">
    <property type="entry name" value="SecA_X-link_sf"/>
</dbReference>
<dbReference type="NCBIfam" id="NF006630">
    <property type="entry name" value="PRK09200.1"/>
    <property type="match status" value="1"/>
</dbReference>
<dbReference type="NCBIfam" id="NF009538">
    <property type="entry name" value="PRK12904.1"/>
    <property type="match status" value="1"/>
</dbReference>
<dbReference type="NCBIfam" id="TIGR00963">
    <property type="entry name" value="secA"/>
    <property type="match status" value="1"/>
</dbReference>
<dbReference type="PANTHER" id="PTHR30612:SF0">
    <property type="entry name" value="CHLOROPLAST PROTEIN-TRANSPORTING ATPASE"/>
    <property type="match status" value="1"/>
</dbReference>
<dbReference type="PANTHER" id="PTHR30612">
    <property type="entry name" value="SECA INNER MEMBRANE COMPONENT OF SEC PROTEIN SECRETION SYSTEM"/>
    <property type="match status" value="1"/>
</dbReference>
<dbReference type="Pfam" id="PF21090">
    <property type="entry name" value="P-loop_SecA"/>
    <property type="match status" value="2"/>
</dbReference>
<dbReference type="Pfam" id="PF07517">
    <property type="entry name" value="SecA_DEAD"/>
    <property type="match status" value="1"/>
</dbReference>
<dbReference type="Pfam" id="PF01043">
    <property type="entry name" value="SecA_PP_bind"/>
    <property type="match status" value="1"/>
</dbReference>
<dbReference type="Pfam" id="PF07516">
    <property type="entry name" value="SecA_SW"/>
    <property type="match status" value="1"/>
</dbReference>
<dbReference type="PRINTS" id="PR00906">
    <property type="entry name" value="SECA"/>
</dbReference>
<dbReference type="SMART" id="SM00957">
    <property type="entry name" value="SecA_DEAD"/>
    <property type="match status" value="1"/>
</dbReference>
<dbReference type="SMART" id="SM00958">
    <property type="entry name" value="SecA_PP_bind"/>
    <property type="match status" value="1"/>
</dbReference>
<dbReference type="SUPFAM" id="SSF81886">
    <property type="entry name" value="Helical scaffold and wing domains of SecA"/>
    <property type="match status" value="1"/>
</dbReference>
<dbReference type="SUPFAM" id="SSF52540">
    <property type="entry name" value="P-loop containing nucleoside triphosphate hydrolases"/>
    <property type="match status" value="2"/>
</dbReference>
<dbReference type="SUPFAM" id="SSF81767">
    <property type="entry name" value="Pre-protein crosslinking domain of SecA"/>
    <property type="match status" value="1"/>
</dbReference>
<dbReference type="PROSITE" id="PS01312">
    <property type="entry name" value="SECA"/>
    <property type="match status" value="1"/>
</dbReference>
<dbReference type="PROSITE" id="PS51196">
    <property type="entry name" value="SECA_MOTOR_DEAD"/>
    <property type="match status" value="1"/>
</dbReference>
<comment type="function">
    <text evidence="1">Part of the Sec protein translocase complex. Interacts with the SecYEG preprotein conducting channel. Has a central role in coupling the hydrolysis of ATP to the transfer of proteins into and across the cell membrane, serving as an ATP-driven molecular motor driving the stepwise translocation of polypeptide chains across the membrane.</text>
</comment>
<comment type="catalytic activity">
    <reaction evidence="1">
        <text>ATP + H2O + cellular proteinSide 1 = ADP + phosphate + cellular proteinSide 2.</text>
        <dbReference type="EC" id="7.4.2.8"/>
    </reaction>
</comment>
<comment type="subunit">
    <text evidence="1">Monomer and homodimer. Part of the essential Sec protein translocation apparatus which comprises SecA, SecYEG and auxiliary proteins SecDF. Other proteins may also be involved.</text>
</comment>
<comment type="subcellular location">
    <subcellularLocation>
        <location evidence="1">Cell membrane</location>
        <topology evidence="1">Peripheral membrane protein</topology>
        <orientation evidence="1">Cytoplasmic side</orientation>
    </subcellularLocation>
    <subcellularLocation>
        <location evidence="1">Cytoplasm</location>
    </subcellularLocation>
    <text evidence="1">Distribution is 50-50.</text>
</comment>
<comment type="similarity">
    <text evidence="1">Belongs to the SecA family.</text>
</comment>
<feature type="chain" id="PRO_1000145027" description="Protein translocase subunit SecA">
    <location>
        <begin position="1"/>
        <end position="787"/>
    </location>
</feature>
<feature type="binding site" evidence="1">
    <location>
        <position position="85"/>
    </location>
    <ligand>
        <name>ATP</name>
        <dbReference type="ChEBI" id="CHEBI:30616"/>
    </ligand>
</feature>
<feature type="binding site" evidence="1">
    <location>
        <begin position="103"/>
        <end position="107"/>
    </location>
    <ligand>
        <name>ATP</name>
        <dbReference type="ChEBI" id="CHEBI:30616"/>
    </ligand>
</feature>
<feature type="binding site" evidence="1">
    <location>
        <position position="492"/>
    </location>
    <ligand>
        <name>ATP</name>
        <dbReference type="ChEBI" id="CHEBI:30616"/>
    </ligand>
</feature>
<evidence type="ECO:0000255" key="1">
    <source>
        <dbReference type="HAMAP-Rule" id="MF_01382"/>
    </source>
</evidence>
<proteinExistence type="inferred from homology"/>
<keyword id="KW-0067">ATP-binding</keyword>
<keyword id="KW-1003">Cell membrane</keyword>
<keyword id="KW-0963">Cytoplasm</keyword>
<keyword id="KW-0472">Membrane</keyword>
<keyword id="KW-0547">Nucleotide-binding</keyword>
<keyword id="KW-0653">Protein transport</keyword>
<keyword id="KW-1278">Translocase</keyword>
<keyword id="KW-0811">Translocation</keyword>
<keyword id="KW-0813">Transport</keyword>
<accession>B3WCM7</accession>
<protein>
    <recommendedName>
        <fullName evidence="1">Protein translocase subunit SecA</fullName>
        <ecNumber evidence="1">7.4.2.8</ecNumber>
    </recommendedName>
</protein>
<reference key="1">
    <citation type="submission" date="2008-06" db="EMBL/GenBank/DDBJ databases">
        <title>Lactobacillus casei BL23 complete genome sequence.</title>
        <authorList>
            <person name="Maze A."/>
            <person name="Boel G."/>
            <person name="Bourand A."/>
            <person name="Loux V."/>
            <person name="Gibrat J.F."/>
            <person name="Zuniga M."/>
            <person name="Hartke A."/>
            <person name="Deutscher J."/>
        </authorList>
    </citation>
    <scope>NUCLEOTIDE SEQUENCE [LARGE SCALE GENOMIC DNA]</scope>
    <source>
        <strain>BL23</strain>
    </source>
</reference>
<sequence length="787" mass="89367">MANILRKWVESDKREIARLGKIADKVQQYEDEYAALSDEQLKANTPKLKDRLAAGATLDDILPEAFATAREGAKRVLGLFPFRVQIIGGIVLHEGNIAEMKTGEGKTLTATMPVYLNALTGKGVHVVTVNEYLSTRDATEMGELYNWLGLSVGLNLNSKNSDEKREAYNCDITYSTNSELGFDYLRDNMVVYKEQMVQRPLNFAIVDEVDSILIDEARTPLIISGGAEKTTGLYIRADRFVKTLKAETDYKIDWPTKTISLTESGIRKAEKNFGLDNLYDTENTALTHHIDQALRANYIMLKDIDYMVSDGEVLIVDQFTGRAMEGRRYSDGLHQAIEAKEGVQIQDENKTMANITYQNFFRMYTKLAGMTGTAKTEQEEFREIYNMEVISVPTNKPVIRVDSPDVLYPTLDAKFNAVVEDIKARHEKGQPMLIGTVAIESSERLSKQLDEAKIPHTVLNAKNHFKEAEIIMNAGQRGAVTIATNMAGRGTDIKLGPGVTELGGLAVIGTERHESRRIDNQLRGRSGRQGDPGSTQFYLSLEDDLMKRFGSDRIKAMLDRFKVADDDQVIQSRMISRQVESAQKRVEGNNYDTRKNTLQYDDVMREQREVIYKQRQQVINEQETLKPVLMAMINRTITRIVQTHTQGDQKDWNLDALYAWVTANMIDPEKFKRSQLDGKSQDELIGLLAEMAETNFQQKNKQLGDDAQMLEFEKVVILRVVDSAWTDHIDAMDQLRQSIGLRGYGQMNPLVEYQEEGYRMFEEMIASIDDDVTRLFMKAEIRQNIRR</sequence>
<name>SECA_LACCB</name>